<sequence length="719" mass="78681">MSDISVEKLTELEAAAELERLARAIAHHDELYHAKDRPEISDAAYDALKRRNEAIEAHFPALVRDDSPSRRVGAAPALATFAPVVHARPMLSLDNAFSDEDVRDFVGSVYRFLGQLPDDSIAFTAEPKIDGLSMSIRYENGILVSGATRGDGTTGENVTANIRTIAEIPNRLPAGAPAVVEVRGEVYMAKSDFLTLNAQMEAEGKQTYVNPRNTAAGSLRQLDAKVTASRKLRFFAYAWGEMSDMPADTQLGMVEVFRQWGFPVNPLMKRFNSVDGLLAHYRAIGMERPTLDYDIDGVVYKVDRLDLQTRLGFRSRSPRWAIAHKFPAEQALTILRGIDIQVGRTGALTPVARLEPITVGGVVVTNATLHNEDYIKGIGQKGEPIREGRDIRIGDSVIVQRAGDVIPQIVDVVLEEGKKRGEPYQFPHVCPACGSHAVREEGEAVRRCTGGLICPAQAVERIRHFVSRNAFDIEGLGEKQVEFFFNAEDPALCIRSPADIFTLKKRQENSLTKLQNIEGFGATSVKKLYDAIDARREIALHRFLFGLGIRHVGEVNAKRLARAYLSYAAFEKAALEAVPPKEGDRTDKGSEAWQDMLAVEGIGSIVAEAVVDFYGEPHNREVLAALLAEVTPLDEEARVATGSPVEGKTVVFTGSLERMSRDEAKAMAERHGAKTAGSVSKKTDLVVAGPGAGSKLAKATELGIEVINEDDWFKLVGED</sequence>
<protein>
    <recommendedName>
        <fullName evidence="1">DNA ligase</fullName>
        <ecNumber evidence="1">6.5.1.2</ecNumber>
    </recommendedName>
    <alternativeName>
        <fullName evidence="1">Polydeoxyribonucleotide synthase [NAD(+)]</fullName>
    </alternativeName>
</protein>
<reference key="1">
    <citation type="journal article" date="2008" name="PLoS ONE">
        <title>Genome sequence of Brucella abortus vaccine strain S19 compared to virulent strains yields candidate virulence genes.</title>
        <authorList>
            <person name="Crasta O.R."/>
            <person name="Folkerts O."/>
            <person name="Fei Z."/>
            <person name="Mane S.P."/>
            <person name="Evans C."/>
            <person name="Martino-Catt S."/>
            <person name="Bricker B."/>
            <person name="Yu G."/>
            <person name="Du L."/>
            <person name="Sobral B.W."/>
        </authorList>
    </citation>
    <scope>NUCLEOTIDE SEQUENCE [LARGE SCALE GENOMIC DNA]</scope>
    <source>
        <strain>S19</strain>
    </source>
</reference>
<feature type="chain" id="PRO_0000380318" description="DNA ligase">
    <location>
        <begin position="1"/>
        <end position="719"/>
    </location>
</feature>
<feature type="domain" description="BRCT" evidence="1">
    <location>
        <begin position="640"/>
        <end position="719"/>
    </location>
</feature>
<feature type="active site" description="N6-AMP-lysine intermediate" evidence="1">
    <location>
        <position position="128"/>
    </location>
</feature>
<feature type="binding site" evidence="1">
    <location>
        <begin position="42"/>
        <end position="46"/>
    </location>
    <ligand>
        <name>NAD(+)</name>
        <dbReference type="ChEBI" id="CHEBI:57540"/>
    </ligand>
</feature>
<feature type="binding site" evidence="1">
    <location>
        <begin position="92"/>
        <end position="93"/>
    </location>
    <ligand>
        <name>NAD(+)</name>
        <dbReference type="ChEBI" id="CHEBI:57540"/>
    </ligand>
</feature>
<feature type="binding site" evidence="1">
    <location>
        <position position="126"/>
    </location>
    <ligand>
        <name>NAD(+)</name>
        <dbReference type="ChEBI" id="CHEBI:57540"/>
    </ligand>
</feature>
<feature type="binding site" evidence="1">
    <location>
        <position position="149"/>
    </location>
    <ligand>
        <name>NAD(+)</name>
        <dbReference type="ChEBI" id="CHEBI:57540"/>
    </ligand>
</feature>
<feature type="binding site" evidence="1">
    <location>
        <position position="185"/>
    </location>
    <ligand>
        <name>NAD(+)</name>
        <dbReference type="ChEBI" id="CHEBI:57540"/>
    </ligand>
</feature>
<feature type="binding site" evidence="1">
    <location>
        <position position="301"/>
    </location>
    <ligand>
        <name>NAD(+)</name>
        <dbReference type="ChEBI" id="CHEBI:57540"/>
    </ligand>
</feature>
<feature type="binding site" evidence="1">
    <location>
        <position position="325"/>
    </location>
    <ligand>
        <name>NAD(+)</name>
        <dbReference type="ChEBI" id="CHEBI:57540"/>
    </ligand>
</feature>
<feature type="binding site" evidence="1">
    <location>
        <position position="430"/>
    </location>
    <ligand>
        <name>Zn(2+)</name>
        <dbReference type="ChEBI" id="CHEBI:29105"/>
    </ligand>
</feature>
<feature type="binding site" evidence="1">
    <location>
        <position position="433"/>
    </location>
    <ligand>
        <name>Zn(2+)</name>
        <dbReference type="ChEBI" id="CHEBI:29105"/>
    </ligand>
</feature>
<feature type="binding site" evidence="1">
    <location>
        <position position="448"/>
    </location>
    <ligand>
        <name>Zn(2+)</name>
        <dbReference type="ChEBI" id="CHEBI:29105"/>
    </ligand>
</feature>
<feature type="binding site" evidence="1">
    <location>
        <position position="454"/>
    </location>
    <ligand>
        <name>Zn(2+)</name>
        <dbReference type="ChEBI" id="CHEBI:29105"/>
    </ligand>
</feature>
<proteinExistence type="inferred from homology"/>
<keyword id="KW-0227">DNA damage</keyword>
<keyword id="KW-0234">DNA repair</keyword>
<keyword id="KW-0235">DNA replication</keyword>
<keyword id="KW-0436">Ligase</keyword>
<keyword id="KW-0460">Magnesium</keyword>
<keyword id="KW-0464">Manganese</keyword>
<keyword id="KW-0479">Metal-binding</keyword>
<keyword id="KW-0520">NAD</keyword>
<keyword id="KW-0862">Zinc</keyword>
<organism>
    <name type="scientific">Brucella abortus (strain S19)</name>
    <dbReference type="NCBI Taxonomy" id="430066"/>
    <lineage>
        <taxon>Bacteria</taxon>
        <taxon>Pseudomonadati</taxon>
        <taxon>Pseudomonadota</taxon>
        <taxon>Alphaproteobacteria</taxon>
        <taxon>Hyphomicrobiales</taxon>
        <taxon>Brucellaceae</taxon>
        <taxon>Brucella/Ochrobactrum group</taxon>
        <taxon>Brucella</taxon>
    </lineage>
</organism>
<evidence type="ECO:0000255" key="1">
    <source>
        <dbReference type="HAMAP-Rule" id="MF_01588"/>
    </source>
</evidence>
<gene>
    <name evidence="1" type="primary">ligA</name>
    <name type="ordered locus">BAbS19_I13460</name>
</gene>
<dbReference type="EC" id="6.5.1.2" evidence="1"/>
<dbReference type="EMBL" id="CP000887">
    <property type="protein sequence ID" value="ACD72841.1"/>
    <property type="molecule type" value="Genomic_DNA"/>
</dbReference>
<dbReference type="RefSeq" id="WP_002964528.1">
    <property type="nucleotide sequence ID" value="NC_010742.1"/>
</dbReference>
<dbReference type="SMR" id="B2S6P4"/>
<dbReference type="GeneID" id="93016281"/>
<dbReference type="KEGG" id="bmc:BAbS19_I13460"/>
<dbReference type="HOGENOM" id="CLU_007764_2_0_5"/>
<dbReference type="Proteomes" id="UP000002565">
    <property type="component" value="Chromosome 1"/>
</dbReference>
<dbReference type="GO" id="GO:0005829">
    <property type="term" value="C:cytosol"/>
    <property type="evidence" value="ECO:0007669"/>
    <property type="project" value="TreeGrafter"/>
</dbReference>
<dbReference type="GO" id="GO:0003911">
    <property type="term" value="F:DNA ligase (NAD+) activity"/>
    <property type="evidence" value="ECO:0007669"/>
    <property type="project" value="UniProtKB-UniRule"/>
</dbReference>
<dbReference type="GO" id="GO:0046872">
    <property type="term" value="F:metal ion binding"/>
    <property type="evidence" value="ECO:0007669"/>
    <property type="project" value="UniProtKB-KW"/>
</dbReference>
<dbReference type="GO" id="GO:0006281">
    <property type="term" value="P:DNA repair"/>
    <property type="evidence" value="ECO:0007669"/>
    <property type="project" value="UniProtKB-KW"/>
</dbReference>
<dbReference type="GO" id="GO:0006260">
    <property type="term" value="P:DNA replication"/>
    <property type="evidence" value="ECO:0007669"/>
    <property type="project" value="UniProtKB-KW"/>
</dbReference>
<dbReference type="CDD" id="cd17748">
    <property type="entry name" value="BRCT_DNA_ligase_like"/>
    <property type="match status" value="1"/>
</dbReference>
<dbReference type="CDD" id="cd00114">
    <property type="entry name" value="LIGANc"/>
    <property type="match status" value="1"/>
</dbReference>
<dbReference type="FunFam" id="3.30.470.30:FF:000001">
    <property type="entry name" value="DNA ligase"/>
    <property type="match status" value="1"/>
</dbReference>
<dbReference type="Gene3D" id="6.20.10.30">
    <property type="match status" value="1"/>
</dbReference>
<dbReference type="Gene3D" id="1.10.150.20">
    <property type="entry name" value="5' to 3' exonuclease, C-terminal subdomain"/>
    <property type="match status" value="2"/>
</dbReference>
<dbReference type="Gene3D" id="3.40.50.10190">
    <property type="entry name" value="BRCT domain"/>
    <property type="match status" value="1"/>
</dbReference>
<dbReference type="Gene3D" id="3.30.470.30">
    <property type="entry name" value="DNA ligase/mRNA capping enzyme"/>
    <property type="match status" value="1"/>
</dbReference>
<dbReference type="Gene3D" id="1.10.287.610">
    <property type="entry name" value="Helix hairpin bin"/>
    <property type="match status" value="1"/>
</dbReference>
<dbReference type="Gene3D" id="2.40.50.140">
    <property type="entry name" value="Nucleic acid-binding proteins"/>
    <property type="match status" value="1"/>
</dbReference>
<dbReference type="HAMAP" id="MF_01588">
    <property type="entry name" value="DNA_ligase_A"/>
    <property type="match status" value="1"/>
</dbReference>
<dbReference type="InterPro" id="IPR001357">
    <property type="entry name" value="BRCT_dom"/>
</dbReference>
<dbReference type="InterPro" id="IPR036420">
    <property type="entry name" value="BRCT_dom_sf"/>
</dbReference>
<dbReference type="InterPro" id="IPR041663">
    <property type="entry name" value="DisA/LigA_HHH"/>
</dbReference>
<dbReference type="InterPro" id="IPR001679">
    <property type="entry name" value="DNA_ligase"/>
</dbReference>
<dbReference type="InterPro" id="IPR018239">
    <property type="entry name" value="DNA_ligase_AS"/>
</dbReference>
<dbReference type="InterPro" id="IPR033136">
    <property type="entry name" value="DNA_ligase_CS"/>
</dbReference>
<dbReference type="InterPro" id="IPR013839">
    <property type="entry name" value="DNAligase_adenylation"/>
</dbReference>
<dbReference type="InterPro" id="IPR013840">
    <property type="entry name" value="DNAligase_N"/>
</dbReference>
<dbReference type="InterPro" id="IPR012340">
    <property type="entry name" value="NA-bd_OB-fold"/>
</dbReference>
<dbReference type="InterPro" id="IPR004150">
    <property type="entry name" value="NAD_DNA_ligase_OB"/>
</dbReference>
<dbReference type="InterPro" id="IPR010994">
    <property type="entry name" value="RuvA_2-like"/>
</dbReference>
<dbReference type="InterPro" id="IPR004149">
    <property type="entry name" value="Znf_DNAligase_C4"/>
</dbReference>
<dbReference type="NCBIfam" id="TIGR00575">
    <property type="entry name" value="dnlj"/>
    <property type="match status" value="1"/>
</dbReference>
<dbReference type="NCBIfam" id="NF005932">
    <property type="entry name" value="PRK07956.1"/>
    <property type="match status" value="1"/>
</dbReference>
<dbReference type="PANTHER" id="PTHR23389">
    <property type="entry name" value="CHROMOSOME TRANSMISSION FIDELITY FACTOR 18"/>
    <property type="match status" value="1"/>
</dbReference>
<dbReference type="PANTHER" id="PTHR23389:SF9">
    <property type="entry name" value="DNA LIGASE"/>
    <property type="match status" value="1"/>
</dbReference>
<dbReference type="Pfam" id="PF00533">
    <property type="entry name" value="BRCT"/>
    <property type="match status" value="1"/>
</dbReference>
<dbReference type="Pfam" id="PF01653">
    <property type="entry name" value="DNA_ligase_aden"/>
    <property type="match status" value="1"/>
</dbReference>
<dbReference type="Pfam" id="PF03120">
    <property type="entry name" value="DNA_ligase_OB"/>
    <property type="match status" value="1"/>
</dbReference>
<dbReference type="Pfam" id="PF03119">
    <property type="entry name" value="DNA_ligase_ZBD"/>
    <property type="match status" value="1"/>
</dbReference>
<dbReference type="Pfam" id="PF12826">
    <property type="entry name" value="HHH_2"/>
    <property type="match status" value="1"/>
</dbReference>
<dbReference type="PIRSF" id="PIRSF001604">
    <property type="entry name" value="LigA"/>
    <property type="match status" value="1"/>
</dbReference>
<dbReference type="SMART" id="SM00292">
    <property type="entry name" value="BRCT"/>
    <property type="match status" value="1"/>
</dbReference>
<dbReference type="SMART" id="SM00532">
    <property type="entry name" value="LIGANc"/>
    <property type="match status" value="1"/>
</dbReference>
<dbReference type="SUPFAM" id="SSF52113">
    <property type="entry name" value="BRCT domain"/>
    <property type="match status" value="1"/>
</dbReference>
<dbReference type="SUPFAM" id="SSF56091">
    <property type="entry name" value="DNA ligase/mRNA capping enzyme, catalytic domain"/>
    <property type="match status" value="1"/>
</dbReference>
<dbReference type="SUPFAM" id="SSF50249">
    <property type="entry name" value="Nucleic acid-binding proteins"/>
    <property type="match status" value="1"/>
</dbReference>
<dbReference type="SUPFAM" id="SSF47781">
    <property type="entry name" value="RuvA domain 2-like"/>
    <property type="match status" value="1"/>
</dbReference>
<dbReference type="PROSITE" id="PS50172">
    <property type="entry name" value="BRCT"/>
    <property type="match status" value="1"/>
</dbReference>
<dbReference type="PROSITE" id="PS01055">
    <property type="entry name" value="DNA_LIGASE_N1"/>
    <property type="match status" value="1"/>
</dbReference>
<dbReference type="PROSITE" id="PS01056">
    <property type="entry name" value="DNA_LIGASE_N2"/>
    <property type="match status" value="1"/>
</dbReference>
<name>DNLJ_BRUA1</name>
<comment type="function">
    <text evidence="1">DNA ligase that catalyzes the formation of phosphodiester linkages between 5'-phosphoryl and 3'-hydroxyl groups in double-stranded DNA using NAD as a coenzyme and as the energy source for the reaction. It is essential for DNA replication and repair of damaged DNA.</text>
</comment>
<comment type="catalytic activity">
    <reaction evidence="1">
        <text>NAD(+) + (deoxyribonucleotide)n-3'-hydroxyl + 5'-phospho-(deoxyribonucleotide)m = (deoxyribonucleotide)n+m + AMP + beta-nicotinamide D-nucleotide.</text>
        <dbReference type="EC" id="6.5.1.2"/>
    </reaction>
</comment>
<comment type="cofactor">
    <cofactor evidence="1">
        <name>Mg(2+)</name>
        <dbReference type="ChEBI" id="CHEBI:18420"/>
    </cofactor>
    <cofactor evidence="1">
        <name>Mn(2+)</name>
        <dbReference type="ChEBI" id="CHEBI:29035"/>
    </cofactor>
</comment>
<comment type="similarity">
    <text evidence="1">Belongs to the NAD-dependent DNA ligase family. LigA subfamily.</text>
</comment>
<accession>B2S6P4</accession>